<dbReference type="EMBL" id="AL021687">
    <property type="status" value="NOT_ANNOTATED_CDS"/>
    <property type="molecule type" value="Genomic_DNA"/>
</dbReference>
<dbReference type="EMBL" id="AL021711">
    <property type="protein sequence ID" value="CAA16762.1"/>
    <property type="status" value="ALT_SEQ"/>
    <property type="molecule type" value="Genomic_DNA"/>
</dbReference>
<dbReference type="EMBL" id="AL161550">
    <property type="protein sequence ID" value="CAB78907.1"/>
    <property type="status" value="ALT_SEQ"/>
    <property type="molecule type" value="Genomic_DNA"/>
</dbReference>
<dbReference type="EMBL" id="CP002687">
    <property type="protein sequence ID" value="AEE84133.1"/>
    <property type="molecule type" value="Genomic_DNA"/>
</dbReference>
<dbReference type="EMBL" id="AK117341">
    <property type="protein sequence ID" value="BAC42011.1"/>
    <property type="molecule type" value="mRNA"/>
</dbReference>
<dbReference type="EMBL" id="BT006214">
    <property type="protein sequence ID" value="AAP12863.1"/>
    <property type="molecule type" value="mRNA"/>
</dbReference>
<dbReference type="PIR" id="T04426">
    <property type="entry name" value="T04426"/>
</dbReference>
<dbReference type="RefSeq" id="NP_001154253.1">
    <property type="nucleotide sequence ID" value="NM_001160781.1"/>
</dbReference>
<dbReference type="SMR" id="Q8GYX0"/>
<dbReference type="FunCoup" id="Q8GYX0">
    <property type="interactions" value="3941"/>
</dbReference>
<dbReference type="IntAct" id="Q8GYX0">
    <property type="interactions" value="1"/>
</dbReference>
<dbReference type="STRING" id="3702.Q8GYX0"/>
<dbReference type="iPTMnet" id="Q8GYX0"/>
<dbReference type="PaxDb" id="3702-AT4G19045.1"/>
<dbReference type="EnsemblPlants" id="AT4G19045.1">
    <property type="protein sequence ID" value="AT4G19045.1"/>
    <property type="gene ID" value="AT4G19045"/>
</dbReference>
<dbReference type="GeneID" id="7922308"/>
<dbReference type="Gramene" id="AT4G19045.1">
    <property type="protein sequence ID" value="AT4G19045.1"/>
    <property type="gene ID" value="AT4G19045"/>
</dbReference>
<dbReference type="KEGG" id="ath:AT4G19045"/>
<dbReference type="Araport" id="AT4G19045"/>
<dbReference type="TAIR" id="AT4G19045">
    <property type="gene designation" value="MOB1B"/>
</dbReference>
<dbReference type="eggNOG" id="KOG0440">
    <property type="taxonomic scope" value="Eukaryota"/>
</dbReference>
<dbReference type="HOGENOM" id="CLU_038321_3_1_1"/>
<dbReference type="InParanoid" id="Q8GYX0"/>
<dbReference type="OMA" id="FRVYSHM"/>
<dbReference type="OrthoDB" id="8170117at2759"/>
<dbReference type="PhylomeDB" id="Q8GYX0"/>
<dbReference type="PRO" id="PR:Q8GYX0"/>
<dbReference type="Proteomes" id="UP000006548">
    <property type="component" value="Chromosome 4"/>
</dbReference>
<dbReference type="ExpressionAtlas" id="Q8GYX0">
    <property type="expression patterns" value="baseline and differential"/>
</dbReference>
<dbReference type="GO" id="GO:0005737">
    <property type="term" value="C:cytoplasm"/>
    <property type="evidence" value="ECO:0000314"/>
    <property type="project" value="TAIR"/>
</dbReference>
<dbReference type="GO" id="GO:0005634">
    <property type="term" value="C:nucleus"/>
    <property type="evidence" value="ECO:0000314"/>
    <property type="project" value="TAIR"/>
</dbReference>
<dbReference type="GO" id="GO:0005886">
    <property type="term" value="C:plasma membrane"/>
    <property type="evidence" value="ECO:0000314"/>
    <property type="project" value="TAIR"/>
</dbReference>
<dbReference type="GO" id="GO:0046872">
    <property type="term" value="F:metal ion binding"/>
    <property type="evidence" value="ECO:0007669"/>
    <property type="project" value="UniProtKB-KW"/>
</dbReference>
<dbReference type="GO" id="GO:0008283">
    <property type="term" value="P:cell population proliferation"/>
    <property type="evidence" value="ECO:0000316"/>
    <property type="project" value="TAIR"/>
</dbReference>
<dbReference type="GO" id="GO:0080141">
    <property type="term" value="P:regulation of jasmonic acid biosynthetic process"/>
    <property type="evidence" value="ECO:0000316"/>
    <property type="project" value="TAIR"/>
</dbReference>
<dbReference type="FunFam" id="1.20.140.30:FF:000001">
    <property type="entry name" value="MOB kinase activator 1A"/>
    <property type="match status" value="1"/>
</dbReference>
<dbReference type="Gene3D" id="1.20.140.30">
    <property type="entry name" value="MOB kinase activator"/>
    <property type="match status" value="1"/>
</dbReference>
<dbReference type="InterPro" id="IPR005301">
    <property type="entry name" value="MOB_kinase_act_fam"/>
</dbReference>
<dbReference type="InterPro" id="IPR036703">
    <property type="entry name" value="MOB_kinase_act_sf"/>
</dbReference>
<dbReference type="PANTHER" id="PTHR22599">
    <property type="entry name" value="MPS ONE BINDER KINASE ACTIVATOR-LIKE MOB"/>
    <property type="match status" value="1"/>
</dbReference>
<dbReference type="Pfam" id="PF03637">
    <property type="entry name" value="Mob1_phocein"/>
    <property type="match status" value="1"/>
</dbReference>
<dbReference type="SMART" id="SM01388">
    <property type="entry name" value="Mob1_phocein"/>
    <property type="match status" value="1"/>
</dbReference>
<dbReference type="SUPFAM" id="SSF101152">
    <property type="entry name" value="Mob1/phocein"/>
    <property type="match status" value="1"/>
</dbReference>
<evidence type="ECO:0000250" key="1">
    <source>
        <dbReference type="UniProtKB" id="P40484"/>
    </source>
</evidence>
<evidence type="ECO:0000256" key="2">
    <source>
        <dbReference type="SAM" id="MobiDB-lite"/>
    </source>
</evidence>
<evidence type="ECO:0000269" key="3">
    <source>
    </source>
</evidence>
<evidence type="ECO:0000269" key="4">
    <source>
    </source>
</evidence>
<evidence type="ECO:0000303" key="5">
    <source>
    </source>
</evidence>
<evidence type="ECO:0000305" key="6"/>
<evidence type="ECO:0000312" key="7">
    <source>
        <dbReference type="Araport" id="AT4G19045"/>
    </source>
</evidence>
<evidence type="ECO:0000312" key="8">
    <source>
        <dbReference type="EMBL" id="AL021687"/>
    </source>
</evidence>
<evidence type="ECO:0000312" key="9">
    <source>
        <dbReference type="EMBL" id="CAA16762.1"/>
    </source>
</evidence>
<sequence length="215" mass="24668">MSLFGLGRNQKTFRPKKSAPSGTKGAELRKHIDATLGSGNLREAVKLPPGEDLNEWLAVNTVDFFNQVNLLFGTLTEFCTPENCSTMTAGPKYEYRWADGVQIKKPIEVSAPKYVEYLMDWIETQLDDETIFPQKLGAAFPPNFKEVVKTIFKRLFRVYAHIYHSHFQKIVSLKEEAHLNTCFKHFILFTHEFVLIDKKELAPLQELIESIIAPY</sequence>
<comment type="subunit">
    <text evidence="4">Interacts with SIK1.</text>
</comment>
<comment type="tissue specificity">
    <text evidence="3">Expression is detected along the vasculature in cotyledons, hypocotyls and roots of 3- to 4-day-old seedlings.</text>
</comment>
<comment type="disruption phenotype">
    <text evidence="3">No visible phenotype.</text>
</comment>
<comment type="similarity">
    <text evidence="6">Belongs to the MOB1/phocein family.</text>
</comment>
<comment type="sequence caution" evidence="6">
    <conflict type="erroneous gene model prediction">
        <sequence resource="EMBL-CDS" id="CAA16762"/>
    </conflict>
    <text>The predicted gene At4g19050 has been split into 2 genes: At4g19045 and At4g19050.</text>
</comment>
<comment type="sequence caution" evidence="6">
    <conflict type="erroneous gene model prediction">
        <sequence resource="EMBL-CDS" id="CAB78907"/>
    </conflict>
    <text>The predicted gene At4g19050 has been split into 2 genes: At4g19045 and At4g19050.</text>
</comment>
<accession>Q8GYX0</accession>
<accession>O50052</accession>
<keyword id="KW-0479">Metal-binding</keyword>
<keyword id="KW-1185">Reference proteome</keyword>
<keyword id="KW-0862">Zinc</keyword>
<reference key="1">
    <citation type="journal article" date="1999" name="Nature">
        <title>Sequence and analysis of chromosome 4 of the plant Arabidopsis thaliana.</title>
        <authorList>
            <person name="Mayer K.F.X."/>
            <person name="Schueller C."/>
            <person name="Wambutt R."/>
            <person name="Murphy G."/>
            <person name="Volckaert G."/>
            <person name="Pohl T."/>
            <person name="Duesterhoeft A."/>
            <person name="Stiekema W."/>
            <person name="Entian K.-D."/>
            <person name="Terryn N."/>
            <person name="Harris B."/>
            <person name="Ansorge W."/>
            <person name="Brandt P."/>
            <person name="Grivell L.A."/>
            <person name="Rieger M."/>
            <person name="Weichselgartner M."/>
            <person name="de Simone V."/>
            <person name="Obermaier B."/>
            <person name="Mache R."/>
            <person name="Mueller M."/>
            <person name="Kreis M."/>
            <person name="Delseny M."/>
            <person name="Puigdomenech P."/>
            <person name="Watson M."/>
            <person name="Schmidtheini T."/>
            <person name="Reichert B."/>
            <person name="Portetelle D."/>
            <person name="Perez-Alonso M."/>
            <person name="Boutry M."/>
            <person name="Bancroft I."/>
            <person name="Vos P."/>
            <person name="Hoheisel J."/>
            <person name="Zimmermann W."/>
            <person name="Wedler H."/>
            <person name="Ridley P."/>
            <person name="Langham S.-A."/>
            <person name="McCullagh B."/>
            <person name="Bilham L."/>
            <person name="Robben J."/>
            <person name="van der Schueren J."/>
            <person name="Grymonprez B."/>
            <person name="Chuang Y.-J."/>
            <person name="Vandenbussche F."/>
            <person name="Braeken M."/>
            <person name="Weltjens I."/>
            <person name="Voet M."/>
            <person name="Bastiaens I."/>
            <person name="Aert R."/>
            <person name="Defoor E."/>
            <person name="Weitzenegger T."/>
            <person name="Bothe G."/>
            <person name="Ramsperger U."/>
            <person name="Hilbert H."/>
            <person name="Braun M."/>
            <person name="Holzer E."/>
            <person name="Brandt A."/>
            <person name="Peters S."/>
            <person name="van Staveren M."/>
            <person name="Dirkse W."/>
            <person name="Mooijman P."/>
            <person name="Klein Lankhorst R."/>
            <person name="Rose M."/>
            <person name="Hauf J."/>
            <person name="Koetter P."/>
            <person name="Berneiser S."/>
            <person name="Hempel S."/>
            <person name="Feldpausch M."/>
            <person name="Lamberth S."/>
            <person name="Van den Daele H."/>
            <person name="De Keyser A."/>
            <person name="Buysshaert C."/>
            <person name="Gielen J."/>
            <person name="Villarroel R."/>
            <person name="De Clercq R."/>
            <person name="van Montagu M."/>
            <person name="Rogers J."/>
            <person name="Cronin A."/>
            <person name="Quail M.A."/>
            <person name="Bray-Allen S."/>
            <person name="Clark L."/>
            <person name="Doggett J."/>
            <person name="Hall S."/>
            <person name="Kay M."/>
            <person name="Lennard N."/>
            <person name="McLay K."/>
            <person name="Mayes R."/>
            <person name="Pettett A."/>
            <person name="Rajandream M.A."/>
            <person name="Lyne M."/>
            <person name="Benes V."/>
            <person name="Rechmann S."/>
            <person name="Borkova D."/>
            <person name="Bloecker H."/>
            <person name="Scharfe M."/>
            <person name="Grimm M."/>
            <person name="Loehnert T.-H."/>
            <person name="Dose S."/>
            <person name="de Haan M."/>
            <person name="Maarse A.C."/>
            <person name="Schaefer M."/>
            <person name="Mueller-Auer S."/>
            <person name="Gabel C."/>
            <person name="Fuchs M."/>
            <person name="Fartmann B."/>
            <person name="Granderath K."/>
            <person name="Dauner D."/>
            <person name="Herzl A."/>
            <person name="Neumann S."/>
            <person name="Argiriou A."/>
            <person name="Vitale D."/>
            <person name="Liguori R."/>
            <person name="Piravandi E."/>
            <person name="Massenet O."/>
            <person name="Quigley F."/>
            <person name="Clabauld G."/>
            <person name="Muendlein A."/>
            <person name="Felber R."/>
            <person name="Schnabl S."/>
            <person name="Hiller R."/>
            <person name="Schmidt W."/>
            <person name="Lecharny A."/>
            <person name="Aubourg S."/>
            <person name="Chefdor F."/>
            <person name="Cooke R."/>
            <person name="Berger C."/>
            <person name="Monfort A."/>
            <person name="Casacuberta E."/>
            <person name="Gibbons T."/>
            <person name="Weber N."/>
            <person name="Vandenbol M."/>
            <person name="Bargues M."/>
            <person name="Terol J."/>
            <person name="Torres A."/>
            <person name="Perez-Perez A."/>
            <person name="Purnelle B."/>
            <person name="Bent E."/>
            <person name="Johnson S."/>
            <person name="Tacon D."/>
            <person name="Jesse T."/>
            <person name="Heijnen L."/>
            <person name="Schwarz S."/>
            <person name="Scholler P."/>
            <person name="Heber S."/>
            <person name="Francs P."/>
            <person name="Bielke C."/>
            <person name="Frishman D."/>
            <person name="Haase D."/>
            <person name="Lemcke K."/>
            <person name="Mewes H.-W."/>
            <person name="Stocker S."/>
            <person name="Zaccaria P."/>
            <person name="Bevan M."/>
            <person name="Wilson R.K."/>
            <person name="de la Bastide M."/>
            <person name="Habermann K."/>
            <person name="Parnell L."/>
            <person name="Dedhia N."/>
            <person name="Gnoj L."/>
            <person name="Schutz K."/>
            <person name="Huang E."/>
            <person name="Spiegel L."/>
            <person name="Sekhon M."/>
            <person name="Murray J."/>
            <person name="Sheet P."/>
            <person name="Cordes M."/>
            <person name="Abu-Threideh J."/>
            <person name="Stoneking T."/>
            <person name="Kalicki J."/>
            <person name="Graves T."/>
            <person name="Harmon G."/>
            <person name="Edwards J."/>
            <person name="Latreille P."/>
            <person name="Courtney L."/>
            <person name="Cloud J."/>
            <person name="Abbott A."/>
            <person name="Scott K."/>
            <person name="Johnson D."/>
            <person name="Minx P."/>
            <person name="Bentley D."/>
            <person name="Fulton B."/>
            <person name="Miller N."/>
            <person name="Greco T."/>
            <person name="Kemp K."/>
            <person name="Kramer J."/>
            <person name="Fulton L."/>
            <person name="Mardis E."/>
            <person name="Dante M."/>
            <person name="Pepin K."/>
            <person name="Hillier L.W."/>
            <person name="Nelson J."/>
            <person name="Spieth J."/>
            <person name="Ryan E."/>
            <person name="Andrews S."/>
            <person name="Geisel C."/>
            <person name="Layman D."/>
            <person name="Du H."/>
            <person name="Ali J."/>
            <person name="Berghoff A."/>
            <person name="Jones K."/>
            <person name="Drone K."/>
            <person name="Cotton M."/>
            <person name="Joshu C."/>
            <person name="Antonoiu B."/>
            <person name="Zidanic M."/>
            <person name="Strong C."/>
            <person name="Sun H."/>
            <person name="Lamar B."/>
            <person name="Yordan C."/>
            <person name="Ma P."/>
            <person name="Zhong J."/>
            <person name="Preston R."/>
            <person name="Vil D."/>
            <person name="Shekher M."/>
            <person name="Matero A."/>
            <person name="Shah R."/>
            <person name="Swaby I.K."/>
            <person name="O'Shaughnessy A."/>
            <person name="Rodriguez M."/>
            <person name="Hoffman J."/>
            <person name="Till S."/>
            <person name="Granat S."/>
            <person name="Shohdy N."/>
            <person name="Hasegawa A."/>
            <person name="Hameed A."/>
            <person name="Lodhi M."/>
            <person name="Johnson A."/>
            <person name="Chen E."/>
            <person name="Marra M.A."/>
            <person name="Martienssen R."/>
            <person name="McCombie W.R."/>
        </authorList>
    </citation>
    <scope>NUCLEOTIDE SEQUENCE [LARGE SCALE GENOMIC DNA]</scope>
    <source>
        <strain>cv. Columbia</strain>
    </source>
</reference>
<reference key="2">
    <citation type="journal article" date="2017" name="Plant J.">
        <title>Araport11: a complete reannotation of the Arabidopsis thaliana reference genome.</title>
        <authorList>
            <person name="Cheng C.Y."/>
            <person name="Krishnakumar V."/>
            <person name="Chan A.P."/>
            <person name="Thibaud-Nissen F."/>
            <person name="Schobel S."/>
            <person name="Town C.D."/>
        </authorList>
    </citation>
    <scope>GENOME REANNOTATION</scope>
    <source>
        <strain>cv. Columbia</strain>
    </source>
</reference>
<reference key="3">
    <citation type="journal article" date="2002" name="Science">
        <title>Functional annotation of a full-length Arabidopsis cDNA collection.</title>
        <authorList>
            <person name="Seki M."/>
            <person name="Narusaka M."/>
            <person name="Kamiya A."/>
            <person name="Ishida J."/>
            <person name="Satou M."/>
            <person name="Sakurai T."/>
            <person name="Nakajima M."/>
            <person name="Enju A."/>
            <person name="Akiyama K."/>
            <person name="Oono Y."/>
            <person name="Muramatsu M."/>
            <person name="Hayashizaki Y."/>
            <person name="Kawai J."/>
            <person name="Carninci P."/>
            <person name="Itoh M."/>
            <person name="Ishii Y."/>
            <person name="Arakawa T."/>
            <person name="Shibata K."/>
            <person name="Shinagawa A."/>
            <person name="Shinozaki K."/>
        </authorList>
    </citation>
    <scope>NUCLEOTIDE SEQUENCE [LARGE SCALE MRNA]</scope>
    <source>
        <strain>cv. Columbia</strain>
    </source>
</reference>
<reference key="4">
    <citation type="journal article" date="2003" name="Science">
        <title>Empirical analysis of transcriptional activity in the Arabidopsis genome.</title>
        <authorList>
            <person name="Yamada K."/>
            <person name="Lim J."/>
            <person name="Dale J.M."/>
            <person name="Chen H."/>
            <person name="Shinn P."/>
            <person name="Palm C.J."/>
            <person name="Southwick A.M."/>
            <person name="Wu H.C."/>
            <person name="Kim C.J."/>
            <person name="Nguyen M."/>
            <person name="Pham P.K."/>
            <person name="Cheuk R.F."/>
            <person name="Karlin-Newmann G."/>
            <person name="Liu S.X."/>
            <person name="Lam B."/>
            <person name="Sakano H."/>
            <person name="Wu T."/>
            <person name="Yu G."/>
            <person name="Miranda M."/>
            <person name="Quach H.L."/>
            <person name="Tripp M."/>
            <person name="Chang C.H."/>
            <person name="Lee J.M."/>
            <person name="Toriumi M.J."/>
            <person name="Chan M.M."/>
            <person name="Tang C.C."/>
            <person name="Onodera C.S."/>
            <person name="Deng J.M."/>
            <person name="Akiyama K."/>
            <person name="Ansari Y."/>
            <person name="Arakawa T."/>
            <person name="Banh J."/>
            <person name="Banno F."/>
            <person name="Bowser L."/>
            <person name="Brooks S.Y."/>
            <person name="Carninci P."/>
            <person name="Chao Q."/>
            <person name="Choy N."/>
            <person name="Enju A."/>
            <person name="Goldsmith A.D."/>
            <person name="Gurjal M."/>
            <person name="Hansen N.F."/>
            <person name="Hayashizaki Y."/>
            <person name="Johnson-Hopson C."/>
            <person name="Hsuan V.W."/>
            <person name="Iida K."/>
            <person name="Karnes M."/>
            <person name="Khan S."/>
            <person name="Koesema E."/>
            <person name="Ishida J."/>
            <person name="Jiang P.X."/>
            <person name="Jones T."/>
            <person name="Kawai J."/>
            <person name="Kamiya A."/>
            <person name="Meyers C."/>
            <person name="Nakajima M."/>
            <person name="Narusaka M."/>
            <person name="Seki M."/>
            <person name="Sakurai T."/>
            <person name="Satou M."/>
            <person name="Tamse R."/>
            <person name="Vaysberg M."/>
            <person name="Wallender E.K."/>
            <person name="Wong C."/>
            <person name="Yamamura Y."/>
            <person name="Yuan S."/>
            <person name="Shinozaki K."/>
            <person name="Davis R.W."/>
            <person name="Theologis A."/>
            <person name="Ecker J.R."/>
        </authorList>
    </citation>
    <scope>NUCLEOTIDE SEQUENCE [LARGE SCALE MRNA]</scope>
    <source>
        <strain>cv. Columbia</strain>
    </source>
</reference>
<reference key="5">
    <citation type="journal article" date="2007" name="Evol. Bioinform. Online">
        <title>Characterization and evolution of the cell cycle-associated mob domain-containing proteins in eukaryotes.</title>
        <authorList>
            <person name="Vitulo N."/>
            <person name="Vezzi A."/>
            <person name="Galla G."/>
            <person name="Citterio S."/>
            <person name="Marino G."/>
            <person name="Ruperti B."/>
            <person name="Zermiani M."/>
            <person name="Albertini E."/>
            <person name="Valle G."/>
            <person name="Barcaccia G."/>
        </authorList>
    </citation>
    <scope>GENE FAMILY</scope>
    <scope>NOMENCLATURE</scope>
</reference>
<reference key="6">
    <citation type="journal article" date="2013" name="Ann. Bot.">
        <title>The Arabidopsis thaliana Mob1A gene is required for organ growth and correct tissue patterning of the root tip.</title>
        <authorList>
            <person name="Pinosa F."/>
            <person name="Begheldo M."/>
            <person name="Pasternak T."/>
            <person name="Zermiani M."/>
            <person name="Paponov I.A."/>
            <person name="Dovzhenko A."/>
            <person name="Barcaccia G."/>
            <person name="Ruperti B."/>
            <person name="Palme K."/>
        </authorList>
    </citation>
    <scope>TISSUE SPECIFICITY</scope>
    <scope>DISRUPTION PHENOTYPE</scope>
</reference>
<reference key="7">
    <citation type="journal article" date="2016" name="J. Exp. Bot.">
        <title>The Hippo/STE20 homolog SIK1 interacts with MOB1 to regulate cell proliferation and cell expansion in Arabidopsis.</title>
        <authorList>
            <person name="Xiong J."/>
            <person name="Cui X."/>
            <person name="Yuan X."/>
            <person name="Yu X."/>
            <person name="Sun J."/>
            <person name="Gong Q."/>
        </authorList>
    </citation>
    <scope>INTERACTION WITH SIK1</scope>
    <source>
        <strain>cv. Columbia</strain>
    </source>
</reference>
<gene>
    <name evidence="5" type="primary">MOB1B</name>
    <name evidence="7" type="ordered locus">At4g19045</name>
    <name evidence="9" type="ORF">F13C5.220</name>
    <name evidence="8" type="ORF">T18B16.1</name>
</gene>
<feature type="chain" id="PRO_0000380716" description="MOB kinase activator-like 1B">
    <location>
        <begin position="1"/>
        <end position="215"/>
    </location>
</feature>
<feature type="region of interest" description="Disordered" evidence="2">
    <location>
        <begin position="1"/>
        <end position="25"/>
    </location>
</feature>
<feature type="binding site" evidence="1">
    <location>
        <position position="79"/>
    </location>
    <ligand>
        <name>Zn(2+)</name>
        <dbReference type="ChEBI" id="CHEBI:29105"/>
    </ligand>
</feature>
<feature type="binding site" evidence="1">
    <location>
        <position position="84"/>
    </location>
    <ligand>
        <name>Zn(2+)</name>
        <dbReference type="ChEBI" id="CHEBI:29105"/>
    </ligand>
</feature>
<feature type="binding site" evidence="1">
    <location>
        <position position="161"/>
    </location>
    <ligand>
        <name>Zn(2+)</name>
        <dbReference type="ChEBI" id="CHEBI:29105"/>
    </ligand>
</feature>
<feature type="binding site" evidence="1">
    <location>
        <position position="166"/>
    </location>
    <ligand>
        <name>Zn(2+)</name>
        <dbReference type="ChEBI" id="CHEBI:29105"/>
    </ligand>
</feature>
<name>MOB1B_ARATH</name>
<organism>
    <name type="scientific">Arabidopsis thaliana</name>
    <name type="common">Mouse-ear cress</name>
    <dbReference type="NCBI Taxonomy" id="3702"/>
    <lineage>
        <taxon>Eukaryota</taxon>
        <taxon>Viridiplantae</taxon>
        <taxon>Streptophyta</taxon>
        <taxon>Embryophyta</taxon>
        <taxon>Tracheophyta</taxon>
        <taxon>Spermatophyta</taxon>
        <taxon>Magnoliopsida</taxon>
        <taxon>eudicotyledons</taxon>
        <taxon>Gunneridae</taxon>
        <taxon>Pentapetalae</taxon>
        <taxon>rosids</taxon>
        <taxon>malvids</taxon>
        <taxon>Brassicales</taxon>
        <taxon>Brassicaceae</taxon>
        <taxon>Camelineae</taxon>
        <taxon>Arabidopsis</taxon>
    </lineage>
</organism>
<protein>
    <recommendedName>
        <fullName evidence="5">MOB kinase activator-like 1B</fullName>
    </recommendedName>
    <alternativeName>
        <fullName evidence="5">Mob1 homolog 1B</fullName>
    </alternativeName>
    <alternativeName>
        <fullName evidence="5">Mps one binder kinase activator-like 1B</fullName>
    </alternativeName>
</protein>
<proteinExistence type="evidence at protein level"/>